<name>PSD3_ARATH</name>
<accession>A4GNA8</accession>
<accession>Q9SZH1</accession>
<keyword id="KW-0106">Calcium</keyword>
<keyword id="KW-0210">Decarboxylase</keyword>
<keyword id="KW-0256">Endoplasmic reticulum</keyword>
<keyword id="KW-0444">Lipid biosynthesis</keyword>
<keyword id="KW-0443">Lipid metabolism</keyword>
<keyword id="KW-0449">Lipoprotein</keyword>
<keyword id="KW-0456">Lyase</keyword>
<keyword id="KW-0472">Membrane</keyword>
<keyword id="KW-0479">Metal-binding</keyword>
<keyword id="KW-0519">Myristate</keyword>
<keyword id="KW-0594">Phospholipid biosynthesis</keyword>
<keyword id="KW-1208">Phospholipid metabolism</keyword>
<keyword id="KW-0670">Pyruvate</keyword>
<keyword id="KW-1185">Reference proteome</keyword>
<keyword id="KW-0677">Repeat</keyword>
<keyword id="KW-0865">Zymogen</keyword>
<gene>
    <name type="primary">PSD3</name>
    <name type="ordered locus">At4g25970</name>
    <name type="ORF">F20B18.80</name>
</gene>
<dbReference type="EC" id="4.1.1.65" evidence="2"/>
<dbReference type="EMBL" id="EF203901">
    <property type="protein sequence ID" value="ABO26297.1"/>
    <property type="molecule type" value="mRNA"/>
</dbReference>
<dbReference type="EMBL" id="AL049483">
    <property type="protein sequence ID" value="CAB39662.1"/>
    <property type="status" value="ALT_SEQ"/>
    <property type="molecule type" value="Genomic_DNA"/>
</dbReference>
<dbReference type="EMBL" id="AL161564">
    <property type="protein sequence ID" value="CAB79452.1"/>
    <property type="status" value="ALT_SEQ"/>
    <property type="molecule type" value="Genomic_DNA"/>
</dbReference>
<dbReference type="EMBL" id="CP002687">
    <property type="protein sequence ID" value="AEE85138.1"/>
    <property type="molecule type" value="Genomic_DNA"/>
</dbReference>
<dbReference type="PIR" id="T04252">
    <property type="entry name" value="T04252"/>
</dbReference>
<dbReference type="RefSeq" id="NP_567736.3">
    <property type="nucleotide sequence ID" value="NM_118730.4"/>
</dbReference>
<dbReference type="SMR" id="A4GNA8"/>
<dbReference type="FunCoup" id="A4GNA8">
    <property type="interactions" value="125"/>
</dbReference>
<dbReference type="STRING" id="3702.A4GNA8"/>
<dbReference type="iPTMnet" id="A4GNA8"/>
<dbReference type="PaxDb" id="3702-AT4G25970.1"/>
<dbReference type="ProteomicsDB" id="226062"/>
<dbReference type="EnsemblPlants" id="AT4G25970.1">
    <property type="protein sequence ID" value="AT4G25970.1"/>
    <property type="gene ID" value="AT4G25970"/>
</dbReference>
<dbReference type="GeneID" id="828703"/>
<dbReference type="Gramene" id="AT4G25970.1">
    <property type="protein sequence ID" value="AT4G25970.1"/>
    <property type="gene ID" value="AT4G25970"/>
</dbReference>
<dbReference type="KEGG" id="ath:AT4G25970"/>
<dbReference type="Araport" id="AT4G25970"/>
<dbReference type="TAIR" id="AT4G25970">
    <property type="gene designation" value="PSD3"/>
</dbReference>
<dbReference type="eggNOG" id="KOG2419">
    <property type="taxonomic scope" value="Eukaryota"/>
</dbReference>
<dbReference type="HOGENOM" id="CLU_034900_0_0_1"/>
<dbReference type="InParanoid" id="A4GNA8"/>
<dbReference type="OMA" id="PSRHNAC"/>
<dbReference type="PhylomeDB" id="A4GNA8"/>
<dbReference type="BioCyc" id="ARA:AT4G25970-MONOMER"/>
<dbReference type="BioCyc" id="MetaCyc:AT4G25970-MONOMER"/>
<dbReference type="UniPathway" id="UPA00558">
    <property type="reaction ID" value="UER00616"/>
</dbReference>
<dbReference type="PRO" id="PR:A4GNA8"/>
<dbReference type="Proteomes" id="UP000006548">
    <property type="component" value="Chromosome 4"/>
</dbReference>
<dbReference type="ExpressionAtlas" id="A4GNA8">
    <property type="expression patterns" value="baseline and differential"/>
</dbReference>
<dbReference type="GO" id="GO:0005829">
    <property type="term" value="C:cytosol"/>
    <property type="evidence" value="ECO:0007005"/>
    <property type="project" value="TAIR"/>
</dbReference>
<dbReference type="GO" id="GO:0005783">
    <property type="term" value="C:endoplasmic reticulum"/>
    <property type="evidence" value="ECO:0000314"/>
    <property type="project" value="TAIR"/>
</dbReference>
<dbReference type="GO" id="GO:0005789">
    <property type="term" value="C:endoplasmic reticulum membrane"/>
    <property type="evidence" value="ECO:0007669"/>
    <property type="project" value="UniProtKB-SubCell"/>
</dbReference>
<dbReference type="GO" id="GO:0005509">
    <property type="term" value="F:calcium ion binding"/>
    <property type="evidence" value="ECO:0007669"/>
    <property type="project" value="InterPro"/>
</dbReference>
<dbReference type="GO" id="GO:0004609">
    <property type="term" value="F:phosphatidylserine decarboxylase activity"/>
    <property type="evidence" value="ECO:0000314"/>
    <property type="project" value="TAIR"/>
</dbReference>
<dbReference type="GO" id="GO:0006646">
    <property type="term" value="P:phosphatidylethanolamine biosynthetic process"/>
    <property type="evidence" value="ECO:0007669"/>
    <property type="project" value="UniProtKB-UniRule"/>
</dbReference>
<dbReference type="GO" id="GO:0016540">
    <property type="term" value="P:protein autoprocessing"/>
    <property type="evidence" value="ECO:0007669"/>
    <property type="project" value="UniProtKB-UniRule"/>
</dbReference>
<dbReference type="CDD" id="cd00051">
    <property type="entry name" value="EFh"/>
    <property type="match status" value="1"/>
</dbReference>
<dbReference type="FunFam" id="1.10.238.10:FF:000200">
    <property type="entry name" value="Phosphatidylserine decarboxylase proenzyme 2"/>
    <property type="match status" value="1"/>
</dbReference>
<dbReference type="FunFam" id="2.60.40.150:FF:000194">
    <property type="entry name" value="Phosphatidylserine decarboxylase proenzyme 2"/>
    <property type="match status" value="1"/>
</dbReference>
<dbReference type="Gene3D" id="2.60.40.150">
    <property type="entry name" value="C2 domain"/>
    <property type="match status" value="1"/>
</dbReference>
<dbReference type="Gene3D" id="1.10.238.10">
    <property type="entry name" value="EF-hand"/>
    <property type="match status" value="1"/>
</dbReference>
<dbReference type="HAMAP" id="MF_00663">
    <property type="entry name" value="PS_decarb_PSD_B_type2"/>
    <property type="match status" value="1"/>
</dbReference>
<dbReference type="InterPro" id="IPR000008">
    <property type="entry name" value="C2_dom"/>
</dbReference>
<dbReference type="InterPro" id="IPR035892">
    <property type="entry name" value="C2_domain_sf"/>
</dbReference>
<dbReference type="InterPro" id="IPR011992">
    <property type="entry name" value="EF-hand-dom_pair"/>
</dbReference>
<dbReference type="InterPro" id="IPR018247">
    <property type="entry name" value="EF_Hand_1_Ca_BS"/>
</dbReference>
<dbReference type="InterPro" id="IPR002048">
    <property type="entry name" value="EF_hand_dom"/>
</dbReference>
<dbReference type="InterPro" id="IPR003817">
    <property type="entry name" value="PS_Dcarbxylase"/>
</dbReference>
<dbReference type="InterPro" id="IPR033177">
    <property type="entry name" value="PSD-B"/>
</dbReference>
<dbReference type="InterPro" id="IPR033179">
    <property type="entry name" value="PSD_type2_pro"/>
</dbReference>
<dbReference type="NCBIfam" id="TIGR00163">
    <property type="entry name" value="PS_decarb"/>
    <property type="match status" value="1"/>
</dbReference>
<dbReference type="PANTHER" id="PTHR10067">
    <property type="entry name" value="PHOSPHATIDYLSERINE DECARBOXYLASE"/>
    <property type="match status" value="1"/>
</dbReference>
<dbReference type="PANTHER" id="PTHR10067:SF17">
    <property type="entry name" value="PHOSPHATIDYLSERINE DECARBOXYLASE PROENZYME 2"/>
    <property type="match status" value="1"/>
</dbReference>
<dbReference type="Pfam" id="PF00168">
    <property type="entry name" value="C2"/>
    <property type="match status" value="1"/>
</dbReference>
<dbReference type="Pfam" id="PF13499">
    <property type="entry name" value="EF-hand_7"/>
    <property type="match status" value="1"/>
</dbReference>
<dbReference type="Pfam" id="PF02666">
    <property type="entry name" value="PS_Dcarbxylase"/>
    <property type="match status" value="1"/>
</dbReference>
<dbReference type="SMART" id="SM00054">
    <property type="entry name" value="EFh"/>
    <property type="match status" value="2"/>
</dbReference>
<dbReference type="SUPFAM" id="SSF49562">
    <property type="entry name" value="C2 domain (Calcium/lipid-binding domain, CaLB)"/>
    <property type="match status" value="1"/>
</dbReference>
<dbReference type="SUPFAM" id="SSF47473">
    <property type="entry name" value="EF-hand"/>
    <property type="match status" value="1"/>
</dbReference>
<dbReference type="PROSITE" id="PS50004">
    <property type="entry name" value="C2"/>
    <property type="match status" value="1"/>
</dbReference>
<dbReference type="PROSITE" id="PS00018">
    <property type="entry name" value="EF_HAND_1"/>
    <property type="match status" value="2"/>
</dbReference>
<dbReference type="PROSITE" id="PS50222">
    <property type="entry name" value="EF_HAND_2"/>
    <property type="match status" value="2"/>
</dbReference>
<protein>
    <recommendedName>
        <fullName>Phosphatidylserine decarboxylase proenzyme 3</fullName>
        <ecNumber evidence="2">4.1.1.65</ecNumber>
    </recommendedName>
    <component>
        <recommendedName>
            <fullName>Phosphatidylserine decarboxylase 3 beta chain</fullName>
        </recommendedName>
    </component>
    <component>
        <recommendedName>
            <fullName>Phosphatidylserine decarboxylase 3 alpha chain</fullName>
        </recommendedName>
    </component>
</protein>
<organism>
    <name type="scientific">Arabidopsis thaliana</name>
    <name type="common">Mouse-ear cress</name>
    <dbReference type="NCBI Taxonomy" id="3702"/>
    <lineage>
        <taxon>Eukaryota</taxon>
        <taxon>Viridiplantae</taxon>
        <taxon>Streptophyta</taxon>
        <taxon>Embryophyta</taxon>
        <taxon>Tracheophyta</taxon>
        <taxon>Spermatophyta</taxon>
        <taxon>Magnoliopsida</taxon>
        <taxon>eudicotyledons</taxon>
        <taxon>Gunneridae</taxon>
        <taxon>Pentapetalae</taxon>
        <taxon>rosids</taxon>
        <taxon>malvids</taxon>
        <taxon>Brassicales</taxon>
        <taxon>Brassicaceae</taxon>
        <taxon>Camelineae</taxon>
        <taxon>Arabidopsis</taxon>
    </lineage>
</organism>
<comment type="function">
    <text evidence="2 5">Catalyzes the formation of phosphatidylethanolamine (PtdEtn) from phosphatidylserine (PtdSer). Plays a central role in phospholipid metabolism and in the interorganelle trafficking of phosphatidylserine. Contributes only to a minor proportion of PtdEtn production.</text>
</comment>
<comment type="catalytic activity">
    <reaction evidence="2">
        <text>a 1,2-diacyl-sn-glycero-3-phospho-L-serine + H(+) = a 1,2-diacyl-sn-glycero-3-phosphoethanolamine + CO2</text>
        <dbReference type="Rhea" id="RHEA:20828"/>
        <dbReference type="ChEBI" id="CHEBI:15378"/>
        <dbReference type="ChEBI" id="CHEBI:16526"/>
        <dbReference type="ChEBI" id="CHEBI:57262"/>
        <dbReference type="ChEBI" id="CHEBI:64612"/>
        <dbReference type="EC" id="4.1.1.65"/>
    </reaction>
</comment>
<comment type="cofactor">
    <cofactor evidence="2">
        <name>pyruvate</name>
        <dbReference type="ChEBI" id="CHEBI:15361"/>
    </cofactor>
    <text evidence="2">Binds 1 pyruvoyl group covalently per subunit.</text>
</comment>
<comment type="pathway">
    <text evidence="2">Phospholipid metabolism; phosphatidylethanolamine biosynthesis; phosphatidylethanolamine from CDP-diacylglycerol: step 2/2.</text>
</comment>
<comment type="subunit">
    <text evidence="2">Heterodimer of a large membrane-associated beta subunit and a small pyruvoyl-containing alpha subunit.</text>
</comment>
<comment type="subcellular location">
    <subcellularLocation>
        <location evidence="8">Endoplasmic reticulum membrane</location>
        <topology evidence="7">Lipid-anchor</topology>
    </subcellularLocation>
</comment>
<comment type="tissue specificity">
    <text evidence="5">Expressed in roots, leaves, stems and flowers.</text>
</comment>
<comment type="domain">
    <text evidence="1">The C2 domains have an essential, but non-catalytic function. They may facilitate interactions with other proteins and are required for lipid transport function.</text>
</comment>
<comment type="PTM">
    <text evidence="2">Is synthesized initially as an inactive proenzyme. Formation of the active enzyme involves a self-maturation process in which the active site pyruvoyl group is generated from an internal serine residue via an autocatalytic post-translational modification. Two non-identical subunits are generated from the proenzyme in this reaction, and the pyruvate is formed at the N-terminus of the alpha chain, which is derived from the carboxyl end of the proenzyme. The autoendoproteolytic cleavage occurs by a canonical serine protease mechanism, in which the side chain hydroxyl group of the serine supplies its oxygen atom to form the C-terminus of the beta chain, while the remainder of the serine residue undergoes an oxidative deamination to produce ammonia and the pyruvoyl prosthetic group on the alpha chain. During this reaction, the Ser that is part of the protease active site of the proenzyme becomes the pyruvoyl prosthetic group, which constitutes an essential element of the active site of the mature decarboxylase.</text>
</comment>
<comment type="disruption phenotype">
    <text evidence="5">No visible phenotype under normal growth conditions.</text>
</comment>
<comment type="similarity">
    <text evidence="2">Belongs to the phosphatidylserine decarboxylase family. PSD-B subfamily. Eukaryotic type II sub-subfamily.</text>
</comment>
<comment type="sequence caution" evidence="7">
    <conflict type="erroneous gene model prediction">
        <sequence resource="EMBL-CDS" id="CAB39662"/>
    </conflict>
</comment>
<comment type="sequence caution" evidence="7">
    <conflict type="erroneous gene model prediction">
        <sequence resource="EMBL-CDS" id="CAB79452"/>
    </conflict>
</comment>
<sequence>MGNGNSTETKESRRSKMRKKIQNFRSRRRLSRPGSGSVSGLASQRSVSADDFAGIALLTLIGAEMKFKDKWLACVSFGEQTFRSEISDSTEKPIWNSEKKLLLEKNGPSLARISVFETNRLLKNNIVGYCELDLLDFVVQEPDSTCKSFDLLDPASSNVVGSMFVSCSVEDPVETETCFAKRILSIVDYDEDGKLSFSEFSDLMNAFGNVVAANKKEELFKAADLNGDGVVTIDELAALLAVQQEQEPIINSCPVCGEALQLDKLNAMIHMTLCFDEGTGNQMTGGFLTDRQASYGWMFKLSEWTHLSTYDVGLNTGSSASHIVVIDRKTKRLVEELIDSKIVMSMRAIYQSKIGLRLMDQGAKEILQNLSEKQGKKMNSVESAQNIPSFLEFFKDQINMAEVKYPLDHFKTFNEFFVRELKPGARPIACMDQDDVAVSAADCRLMAFQSVDDSTRFWIKGRKFSIKGLLGNDVQSDAFLDGSLVIFRLAPQDYHRFHSPVSGVIEKFVNVSGSLYTVNPIAVNSKYCNVFTENKRTIVIISTAEFGKVAFVAIGATMVGSISFVRQEGDHVKKGDELGYFSFGGSTVICVFEKDSIKIDEDLLANSARSLETLVTVGMQLGVSFPKLENCVLEP</sequence>
<feature type="initiator methionine" description="Removed" evidence="6 9">
    <location>
        <position position="1"/>
    </location>
</feature>
<feature type="chain" id="PRO_0000429517" description="Phosphatidylserine decarboxylase proenzyme 3">
    <location>
        <begin position="2"/>
        <end position="635"/>
    </location>
</feature>
<feature type="chain" id="PRO_0000429518" description="Phosphatidylserine decarboxylase 3 beta chain" evidence="2">
    <location>
        <begin position="2"/>
        <end position="585"/>
    </location>
</feature>
<feature type="chain" id="PRO_0000429519" description="Phosphatidylserine decarboxylase 3 alpha chain" evidence="2">
    <location>
        <begin position="586"/>
        <end position="635"/>
    </location>
</feature>
<feature type="domain" description="C2" evidence="3">
    <location>
        <begin position="22"/>
        <end position="147"/>
    </location>
</feature>
<feature type="domain" description="EF-hand 1" evidence="2">
    <location>
        <begin position="180"/>
        <end position="210"/>
    </location>
</feature>
<feature type="domain" description="EF-hand 2" evidence="2">
    <location>
        <begin position="211"/>
        <end position="246"/>
    </location>
</feature>
<feature type="region of interest" description="Disordered" evidence="4">
    <location>
        <begin position="1"/>
        <end position="42"/>
    </location>
</feature>
<feature type="compositionally biased region" description="Basic residues" evidence="4">
    <location>
        <begin position="15"/>
        <end position="31"/>
    </location>
</feature>
<feature type="active site" description="Charge relay system; for autoendoproteolytic cleavage activity" evidence="2">
    <location>
        <position position="442"/>
    </location>
</feature>
<feature type="active site" description="Charge relay system; for autoendoproteolytic cleavage activity" evidence="2">
    <location>
        <position position="498"/>
    </location>
</feature>
<feature type="active site" description="Charge relay system; for autoendoproteolytic cleavage activity" evidence="2">
    <location>
        <position position="586"/>
    </location>
</feature>
<feature type="active site" description="Schiff-base intermediate with substrate; via pyruvic acid; for decarboxylase activity" evidence="2">
    <location>
        <position position="586"/>
    </location>
</feature>
<feature type="binding site" evidence="2">
    <location>
        <position position="188"/>
    </location>
    <ligand>
        <name>Ca(2+)</name>
        <dbReference type="ChEBI" id="CHEBI:29108"/>
        <label>1</label>
    </ligand>
</feature>
<feature type="binding site" evidence="2">
    <location>
        <position position="190"/>
    </location>
    <ligand>
        <name>Ca(2+)</name>
        <dbReference type="ChEBI" id="CHEBI:29108"/>
        <label>1</label>
    </ligand>
</feature>
<feature type="binding site" evidence="2">
    <location>
        <position position="192"/>
    </location>
    <ligand>
        <name>Ca(2+)</name>
        <dbReference type="ChEBI" id="CHEBI:29108"/>
        <label>1</label>
    </ligand>
</feature>
<feature type="binding site" evidence="2">
    <location>
        <position position="194"/>
    </location>
    <ligand>
        <name>Ca(2+)</name>
        <dbReference type="ChEBI" id="CHEBI:29108"/>
        <label>1</label>
    </ligand>
</feature>
<feature type="binding site" evidence="2">
    <location>
        <position position="199"/>
    </location>
    <ligand>
        <name>Ca(2+)</name>
        <dbReference type="ChEBI" id="CHEBI:29108"/>
        <label>1</label>
    </ligand>
</feature>
<feature type="binding site" evidence="2">
    <location>
        <position position="224"/>
    </location>
    <ligand>
        <name>Ca(2+)</name>
        <dbReference type="ChEBI" id="CHEBI:29108"/>
        <label>2</label>
    </ligand>
</feature>
<feature type="binding site" evidence="2">
    <location>
        <position position="226"/>
    </location>
    <ligand>
        <name>Ca(2+)</name>
        <dbReference type="ChEBI" id="CHEBI:29108"/>
        <label>2</label>
    </ligand>
</feature>
<feature type="binding site" evidence="2">
    <location>
        <position position="228"/>
    </location>
    <ligand>
        <name>Ca(2+)</name>
        <dbReference type="ChEBI" id="CHEBI:29108"/>
        <label>2</label>
    </ligand>
</feature>
<feature type="binding site" evidence="2">
    <location>
        <position position="235"/>
    </location>
    <ligand>
        <name>Ca(2+)</name>
        <dbReference type="ChEBI" id="CHEBI:29108"/>
        <label>2</label>
    </ligand>
</feature>
<feature type="site" description="Cleavage (non-hydrolytic); by autocatalysis" evidence="2">
    <location>
        <begin position="585"/>
        <end position="586"/>
    </location>
</feature>
<feature type="modified residue" description="Pyruvic acid (Ser); by autocatalysis" evidence="2">
    <location>
        <position position="586"/>
    </location>
</feature>
<feature type="lipid moiety-binding region" description="N-myristoyl glycine" evidence="6">
    <location>
        <position position="2"/>
    </location>
</feature>
<evidence type="ECO:0000250" key="1">
    <source>
        <dbReference type="UniProtKB" id="P53037"/>
    </source>
</evidence>
<evidence type="ECO:0000255" key="2">
    <source>
        <dbReference type="HAMAP-Rule" id="MF_03209"/>
    </source>
</evidence>
<evidence type="ECO:0000255" key="3">
    <source>
        <dbReference type="PROSITE-ProRule" id="PRU00041"/>
    </source>
</evidence>
<evidence type="ECO:0000256" key="4">
    <source>
        <dbReference type="SAM" id="MobiDB-lite"/>
    </source>
</evidence>
<evidence type="ECO:0000269" key="5">
    <source>
    </source>
</evidence>
<evidence type="ECO:0000269" key="6">
    <source>
    </source>
</evidence>
<evidence type="ECO:0000305" key="7"/>
<evidence type="ECO:0000305" key="8">
    <source>
    </source>
</evidence>
<evidence type="ECO:0007744" key="9">
    <source>
    </source>
</evidence>
<proteinExistence type="evidence at protein level"/>
<reference key="1">
    <citation type="journal article" date="2007" name="Plant Physiol.">
        <title>Deficiency in phosphatidylserine decarboxylase activity in the psd1 psd2 psd3 triple mutant of Arabidopsis affects phosphatidylethanolamine accumulation in mitochondria.</title>
        <authorList>
            <person name="Nerlich A."/>
            <person name="von Orlow M."/>
            <person name="Rontein D."/>
            <person name="Hanson A.D."/>
            <person name="Dormann P."/>
        </authorList>
    </citation>
    <scope>NUCLEOTIDE SEQUENCE [MRNA]</scope>
    <scope>FUNCTION</scope>
    <scope>SUBCELLULAR LOCATION</scope>
    <scope>TISSUE SPECIFICITY</scope>
    <scope>DISRUPTION PHENOTYPE</scope>
</reference>
<reference key="2">
    <citation type="journal article" date="1999" name="Nature">
        <title>Sequence and analysis of chromosome 4 of the plant Arabidopsis thaliana.</title>
        <authorList>
            <person name="Mayer K.F.X."/>
            <person name="Schueller C."/>
            <person name="Wambutt R."/>
            <person name="Murphy G."/>
            <person name="Volckaert G."/>
            <person name="Pohl T."/>
            <person name="Duesterhoeft A."/>
            <person name="Stiekema W."/>
            <person name="Entian K.-D."/>
            <person name="Terryn N."/>
            <person name="Harris B."/>
            <person name="Ansorge W."/>
            <person name="Brandt P."/>
            <person name="Grivell L.A."/>
            <person name="Rieger M."/>
            <person name="Weichselgartner M."/>
            <person name="de Simone V."/>
            <person name="Obermaier B."/>
            <person name="Mache R."/>
            <person name="Mueller M."/>
            <person name="Kreis M."/>
            <person name="Delseny M."/>
            <person name="Puigdomenech P."/>
            <person name="Watson M."/>
            <person name="Schmidtheini T."/>
            <person name="Reichert B."/>
            <person name="Portetelle D."/>
            <person name="Perez-Alonso M."/>
            <person name="Boutry M."/>
            <person name="Bancroft I."/>
            <person name="Vos P."/>
            <person name="Hoheisel J."/>
            <person name="Zimmermann W."/>
            <person name="Wedler H."/>
            <person name="Ridley P."/>
            <person name="Langham S.-A."/>
            <person name="McCullagh B."/>
            <person name="Bilham L."/>
            <person name="Robben J."/>
            <person name="van der Schueren J."/>
            <person name="Grymonprez B."/>
            <person name="Chuang Y.-J."/>
            <person name="Vandenbussche F."/>
            <person name="Braeken M."/>
            <person name="Weltjens I."/>
            <person name="Voet M."/>
            <person name="Bastiaens I."/>
            <person name="Aert R."/>
            <person name="Defoor E."/>
            <person name="Weitzenegger T."/>
            <person name="Bothe G."/>
            <person name="Ramsperger U."/>
            <person name="Hilbert H."/>
            <person name="Braun M."/>
            <person name="Holzer E."/>
            <person name="Brandt A."/>
            <person name="Peters S."/>
            <person name="van Staveren M."/>
            <person name="Dirkse W."/>
            <person name="Mooijman P."/>
            <person name="Klein Lankhorst R."/>
            <person name="Rose M."/>
            <person name="Hauf J."/>
            <person name="Koetter P."/>
            <person name="Berneiser S."/>
            <person name="Hempel S."/>
            <person name="Feldpausch M."/>
            <person name="Lamberth S."/>
            <person name="Van den Daele H."/>
            <person name="De Keyser A."/>
            <person name="Buysshaert C."/>
            <person name="Gielen J."/>
            <person name="Villarroel R."/>
            <person name="De Clercq R."/>
            <person name="van Montagu M."/>
            <person name="Rogers J."/>
            <person name="Cronin A."/>
            <person name="Quail M.A."/>
            <person name="Bray-Allen S."/>
            <person name="Clark L."/>
            <person name="Doggett J."/>
            <person name="Hall S."/>
            <person name="Kay M."/>
            <person name="Lennard N."/>
            <person name="McLay K."/>
            <person name="Mayes R."/>
            <person name="Pettett A."/>
            <person name="Rajandream M.A."/>
            <person name="Lyne M."/>
            <person name="Benes V."/>
            <person name="Rechmann S."/>
            <person name="Borkova D."/>
            <person name="Bloecker H."/>
            <person name="Scharfe M."/>
            <person name="Grimm M."/>
            <person name="Loehnert T.-H."/>
            <person name="Dose S."/>
            <person name="de Haan M."/>
            <person name="Maarse A.C."/>
            <person name="Schaefer M."/>
            <person name="Mueller-Auer S."/>
            <person name="Gabel C."/>
            <person name="Fuchs M."/>
            <person name="Fartmann B."/>
            <person name="Granderath K."/>
            <person name="Dauner D."/>
            <person name="Herzl A."/>
            <person name="Neumann S."/>
            <person name="Argiriou A."/>
            <person name="Vitale D."/>
            <person name="Liguori R."/>
            <person name="Piravandi E."/>
            <person name="Massenet O."/>
            <person name="Quigley F."/>
            <person name="Clabauld G."/>
            <person name="Muendlein A."/>
            <person name="Felber R."/>
            <person name="Schnabl S."/>
            <person name="Hiller R."/>
            <person name="Schmidt W."/>
            <person name="Lecharny A."/>
            <person name="Aubourg S."/>
            <person name="Chefdor F."/>
            <person name="Cooke R."/>
            <person name="Berger C."/>
            <person name="Monfort A."/>
            <person name="Casacuberta E."/>
            <person name="Gibbons T."/>
            <person name="Weber N."/>
            <person name="Vandenbol M."/>
            <person name="Bargues M."/>
            <person name="Terol J."/>
            <person name="Torres A."/>
            <person name="Perez-Perez A."/>
            <person name="Purnelle B."/>
            <person name="Bent E."/>
            <person name="Johnson S."/>
            <person name="Tacon D."/>
            <person name="Jesse T."/>
            <person name="Heijnen L."/>
            <person name="Schwarz S."/>
            <person name="Scholler P."/>
            <person name="Heber S."/>
            <person name="Francs P."/>
            <person name="Bielke C."/>
            <person name="Frishman D."/>
            <person name="Haase D."/>
            <person name="Lemcke K."/>
            <person name="Mewes H.-W."/>
            <person name="Stocker S."/>
            <person name="Zaccaria P."/>
            <person name="Bevan M."/>
            <person name="Wilson R.K."/>
            <person name="de la Bastide M."/>
            <person name="Habermann K."/>
            <person name="Parnell L."/>
            <person name="Dedhia N."/>
            <person name="Gnoj L."/>
            <person name="Schutz K."/>
            <person name="Huang E."/>
            <person name="Spiegel L."/>
            <person name="Sekhon M."/>
            <person name="Murray J."/>
            <person name="Sheet P."/>
            <person name="Cordes M."/>
            <person name="Abu-Threideh J."/>
            <person name="Stoneking T."/>
            <person name="Kalicki J."/>
            <person name="Graves T."/>
            <person name="Harmon G."/>
            <person name="Edwards J."/>
            <person name="Latreille P."/>
            <person name="Courtney L."/>
            <person name="Cloud J."/>
            <person name="Abbott A."/>
            <person name="Scott K."/>
            <person name="Johnson D."/>
            <person name="Minx P."/>
            <person name="Bentley D."/>
            <person name="Fulton B."/>
            <person name="Miller N."/>
            <person name="Greco T."/>
            <person name="Kemp K."/>
            <person name="Kramer J."/>
            <person name="Fulton L."/>
            <person name="Mardis E."/>
            <person name="Dante M."/>
            <person name="Pepin K."/>
            <person name="Hillier L.W."/>
            <person name="Nelson J."/>
            <person name="Spieth J."/>
            <person name="Ryan E."/>
            <person name="Andrews S."/>
            <person name="Geisel C."/>
            <person name="Layman D."/>
            <person name="Du H."/>
            <person name="Ali J."/>
            <person name="Berghoff A."/>
            <person name="Jones K."/>
            <person name="Drone K."/>
            <person name="Cotton M."/>
            <person name="Joshu C."/>
            <person name="Antonoiu B."/>
            <person name="Zidanic M."/>
            <person name="Strong C."/>
            <person name="Sun H."/>
            <person name="Lamar B."/>
            <person name="Yordan C."/>
            <person name="Ma P."/>
            <person name="Zhong J."/>
            <person name="Preston R."/>
            <person name="Vil D."/>
            <person name="Shekher M."/>
            <person name="Matero A."/>
            <person name="Shah R."/>
            <person name="Swaby I.K."/>
            <person name="O'Shaughnessy A."/>
            <person name="Rodriguez M."/>
            <person name="Hoffman J."/>
            <person name="Till S."/>
            <person name="Granat S."/>
            <person name="Shohdy N."/>
            <person name="Hasegawa A."/>
            <person name="Hameed A."/>
            <person name="Lodhi M."/>
            <person name="Johnson A."/>
            <person name="Chen E."/>
            <person name="Marra M.A."/>
            <person name="Martienssen R."/>
            <person name="McCombie W.R."/>
        </authorList>
    </citation>
    <scope>NUCLEOTIDE SEQUENCE [LARGE SCALE GENOMIC DNA]</scope>
    <source>
        <strain>cv. Columbia</strain>
    </source>
</reference>
<reference key="3">
    <citation type="journal article" date="2017" name="Plant J.">
        <title>Araport11: a complete reannotation of the Arabidopsis thaliana reference genome.</title>
        <authorList>
            <person name="Cheng C.Y."/>
            <person name="Krishnakumar V."/>
            <person name="Chan A.P."/>
            <person name="Thibaud-Nissen F."/>
            <person name="Schobel S."/>
            <person name="Town C.D."/>
        </authorList>
    </citation>
    <scope>GENOME REANNOTATION</scope>
    <source>
        <strain>cv. Columbia</strain>
    </source>
</reference>
<reference key="4">
    <citation type="journal article" date="2012" name="Mol. Cell. Proteomics">
        <title>Comparative large-scale characterisation of plant vs. mammal proteins reveals similar and idiosyncratic N-alpha acetylation features.</title>
        <authorList>
            <person name="Bienvenut W.V."/>
            <person name="Sumpton D."/>
            <person name="Martinez A."/>
            <person name="Lilla S."/>
            <person name="Espagne C."/>
            <person name="Meinnel T."/>
            <person name="Giglione C."/>
        </authorList>
    </citation>
    <scope>MYRISTOYLATION AT GLY-2</scope>
    <scope>CLEAVAGE OF INITIATOR METHIONINE [LARGE SCALE ANALYSIS]</scope>
    <scope>IDENTIFICATION BY MASS SPECTROMETRY [LARGE SCALE ANALYSIS]</scope>
</reference>